<keyword id="KW-0012">Acyltransferase</keyword>
<keyword id="KW-0319">Glycerol metabolism</keyword>
<keyword id="KW-0444">Lipid biosynthesis</keyword>
<keyword id="KW-0443">Lipid metabolism</keyword>
<keyword id="KW-1185">Reference proteome</keyword>
<keyword id="KW-0808">Transferase</keyword>
<dbReference type="EC" id="2.3.1.20" evidence="1"/>
<dbReference type="EMBL" id="AE000516">
    <property type="protein sequence ID" value="AAK47674.1"/>
    <property type="molecule type" value="Genomic_DNA"/>
</dbReference>
<dbReference type="PIR" id="D70591">
    <property type="entry name" value="D70591"/>
</dbReference>
<dbReference type="SMR" id="P9WKC4"/>
<dbReference type="KEGG" id="mtc:MT3331"/>
<dbReference type="PATRIC" id="fig|83331.31.peg.3587"/>
<dbReference type="HOGENOM" id="CLU_024186_4_0_11"/>
<dbReference type="UniPathway" id="UPA00282"/>
<dbReference type="Proteomes" id="UP000001020">
    <property type="component" value="Chromosome"/>
</dbReference>
<dbReference type="GO" id="GO:0005886">
    <property type="term" value="C:plasma membrane"/>
    <property type="evidence" value="ECO:0007669"/>
    <property type="project" value="TreeGrafter"/>
</dbReference>
<dbReference type="GO" id="GO:0004144">
    <property type="term" value="F:diacylglycerol O-acyltransferase activity"/>
    <property type="evidence" value="ECO:0007669"/>
    <property type="project" value="UniProtKB-EC"/>
</dbReference>
<dbReference type="GO" id="GO:0051701">
    <property type="term" value="P:biological process involved in interaction with host"/>
    <property type="evidence" value="ECO:0007669"/>
    <property type="project" value="TreeGrafter"/>
</dbReference>
<dbReference type="GO" id="GO:0006071">
    <property type="term" value="P:glycerol metabolic process"/>
    <property type="evidence" value="ECO:0007669"/>
    <property type="project" value="UniProtKB-KW"/>
</dbReference>
<dbReference type="GO" id="GO:0001666">
    <property type="term" value="P:response to hypoxia"/>
    <property type="evidence" value="ECO:0007669"/>
    <property type="project" value="TreeGrafter"/>
</dbReference>
<dbReference type="GO" id="GO:0071731">
    <property type="term" value="P:response to nitric oxide"/>
    <property type="evidence" value="ECO:0007669"/>
    <property type="project" value="TreeGrafter"/>
</dbReference>
<dbReference type="GO" id="GO:0019432">
    <property type="term" value="P:triglyceride biosynthetic process"/>
    <property type="evidence" value="ECO:0007669"/>
    <property type="project" value="UniProtKB-UniPathway"/>
</dbReference>
<dbReference type="InterPro" id="IPR045034">
    <property type="entry name" value="O-acyltransferase_WSD1-like"/>
</dbReference>
<dbReference type="InterPro" id="IPR004255">
    <property type="entry name" value="O-acyltransferase_WSD1_N"/>
</dbReference>
<dbReference type="PANTHER" id="PTHR31650">
    <property type="entry name" value="O-ACYLTRANSFERASE (WSD1-LIKE) FAMILY PROTEIN"/>
    <property type="match status" value="1"/>
</dbReference>
<dbReference type="PANTHER" id="PTHR31650:SF1">
    <property type="entry name" value="WAX ESTER SYNTHASE_DIACYLGLYCEROL ACYLTRANSFERASE 4-RELATED"/>
    <property type="match status" value="1"/>
</dbReference>
<dbReference type="Pfam" id="PF03007">
    <property type="entry name" value="WS_DGAT_cat"/>
    <property type="match status" value="1"/>
</dbReference>
<dbReference type="SUPFAM" id="SSF52777">
    <property type="entry name" value="CoA-dependent acyltransferases"/>
    <property type="match status" value="1"/>
</dbReference>
<feature type="chain" id="PRO_0000427678" description="Probable diacyglycerol O-acyltransferase tgs3">
    <location>
        <begin position="1"/>
        <end position="271"/>
    </location>
</feature>
<sequence length="271" mass="30379">MVTRLSASDASFYQLENTATPMYVGLLLILRRPRAGLSYEALLETVEQRLPQIPRYRQKVQEVKLGLARPVWIDDRDFDITYHVRRSALPSPGSDEQLHELIARLAARPLDKSRPLWEMYLVEGLEKNRIALYTKSHQALINGVTALAIGHVIADRTRRPPAFPEDIWVPERDPGTTRLLLRAVGDWLVRPGAQLQAVGSAVAGLVTNSGQLVETGRKVLDIARTVARGTAPSSPLNATVSRNRRFTVARASLDDYRTVRARYDCDSTTWC</sequence>
<accession>P9WKC4</accession>
<accession>L0TC77</accession>
<accession>O05879</accession>
<evidence type="ECO:0000250" key="1">
    <source>
        <dbReference type="UniProtKB" id="P9WKC5"/>
    </source>
</evidence>
<evidence type="ECO:0000250" key="2">
    <source>
        <dbReference type="UniProtKB" id="P9WKC9"/>
    </source>
</evidence>
<evidence type="ECO:0000305" key="3"/>
<organism>
    <name type="scientific">Mycobacterium tuberculosis (strain CDC 1551 / Oshkosh)</name>
    <dbReference type="NCBI Taxonomy" id="83331"/>
    <lineage>
        <taxon>Bacteria</taxon>
        <taxon>Bacillati</taxon>
        <taxon>Actinomycetota</taxon>
        <taxon>Actinomycetes</taxon>
        <taxon>Mycobacteriales</taxon>
        <taxon>Mycobacteriaceae</taxon>
        <taxon>Mycobacterium</taxon>
        <taxon>Mycobacterium tuberculosis complex</taxon>
    </lineage>
</organism>
<comment type="function">
    <text evidence="2">Catalyzes the terminal and only committed step in triacylglycerol synthesis by using diacylglycerol and fatty acyl CoA as substrates. Required for storage lipid synthesis.</text>
</comment>
<comment type="catalytic activity">
    <reaction evidence="1">
        <text>an acyl-CoA + a 1,2-diacyl-sn-glycerol = a triacyl-sn-glycerol + CoA</text>
        <dbReference type="Rhea" id="RHEA:10868"/>
        <dbReference type="ChEBI" id="CHEBI:17815"/>
        <dbReference type="ChEBI" id="CHEBI:57287"/>
        <dbReference type="ChEBI" id="CHEBI:58342"/>
        <dbReference type="ChEBI" id="CHEBI:64615"/>
        <dbReference type="EC" id="2.3.1.20"/>
    </reaction>
</comment>
<comment type="pathway">
    <text>Glycerolipid metabolism; triacylglycerol biosynthesis.</text>
</comment>
<comment type="similarity">
    <text evidence="3">Belongs to the long-chain O-acyltransferase family.</text>
</comment>
<comment type="caution">
    <text evidence="3">Lacks the conserved His residue in position 138 suggested to serve as a proton acceptor for this family.</text>
</comment>
<reference key="1">
    <citation type="journal article" date="2002" name="J. Bacteriol.">
        <title>Whole-genome comparison of Mycobacterium tuberculosis clinical and laboratory strains.</title>
        <authorList>
            <person name="Fleischmann R.D."/>
            <person name="Alland D."/>
            <person name="Eisen J.A."/>
            <person name="Carpenter L."/>
            <person name="White O."/>
            <person name="Peterson J.D."/>
            <person name="DeBoy R.T."/>
            <person name="Dodson R.J."/>
            <person name="Gwinn M.L."/>
            <person name="Haft D.H."/>
            <person name="Hickey E.K."/>
            <person name="Kolonay J.F."/>
            <person name="Nelson W.C."/>
            <person name="Umayam L.A."/>
            <person name="Ermolaeva M.D."/>
            <person name="Salzberg S.L."/>
            <person name="Delcher A."/>
            <person name="Utterback T.R."/>
            <person name="Weidman J.F."/>
            <person name="Khouri H.M."/>
            <person name="Gill J."/>
            <person name="Mikula A."/>
            <person name="Bishai W."/>
            <person name="Jacobs W.R. Jr."/>
            <person name="Venter J.C."/>
            <person name="Fraser C.M."/>
        </authorList>
    </citation>
    <scope>NUCLEOTIDE SEQUENCE [LARGE SCALE GENOMIC DNA]</scope>
    <source>
        <strain>CDC 1551 / Oshkosh</strain>
    </source>
</reference>
<name>TGS3_MYCTO</name>
<gene>
    <name type="primary">tgs3</name>
    <name type="ordered locus">MT3331</name>
</gene>
<proteinExistence type="inferred from homology"/>
<protein>
    <recommendedName>
        <fullName>Probable diacyglycerol O-acyltransferase tgs3</fullName>
        <shortName>TGS3</shortName>
        <ecNumber evidence="1">2.3.1.20</ecNumber>
    </recommendedName>
    <alternativeName>
        <fullName>Probable triacylglycerol synthase tgs3</fullName>
    </alternativeName>
</protein>